<name>SYR_SOLM1</name>
<gene>
    <name evidence="1" type="primary">argS</name>
    <name type="ordered locus">DMR_23300</name>
</gene>
<proteinExistence type="inferred from homology"/>
<dbReference type="EC" id="6.1.1.19" evidence="1"/>
<dbReference type="EMBL" id="AP010904">
    <property type="protein sequence ID" value="BAH75821.1"/>
    <property type="molecule type" value="Genomic_DNA"/>
</dbReference>
<dbReference type="RefSeq" id="WP_015861003.1">
    <property type="nucleotide sequence ID" value="NC_012796.1"/>
</dbReference>
<dbReference type="SMR" id="C4XSX9"/>
<dbReference type="STRING" id="573370.DMR_23300"/>
<dbReference type="KEGG" id="dma:DMR_23300"/>
<dbReference type="eggNOG" id="COG0018">
    <property type="taxonomic scope" value="Bacteria"/>
</dbReference>
<dbReference type="HOGENOM" id="CLU_006406_0_1_7"/>
<dbReference type="OrthoDB" id="9803211at2"/>
<dbReference type="Proteomes" id="UP000009071">
    <property type="component" value="Chromosome"/>
</dbReference>
<dbReference type="GO" id="GO:0005737">
    <property type="term" value="C:cytoplasm"/>
    <property type="evidence" value="ECO:0007669"/>
    <property type="project" value="UniProtKB-SubCell"/>
</dbReference>
<dbReference type="GO" id="GO:0004814">
    <property type="term" value="F:arginine-tRNA ligase activity"/>
    <property type="evidence" value="ECO:0007669"/>
    <property type="project" value="UniProtKB-UniRule"/>
</dbReference>
<dbReference type="GO" id="GO:0005524">
    <property type="term" value="F:ATP binding"/>
    <property type="evidence" value="ECO:0007669"/>
    <property type="project" value="UniProtKB-UniRule"/>
</dbReference>
<dbReference type="GO" id="GO:0006420">
    <property type="term" value="P:arginyl-tRNA aminoacylation"/>
    <property type="evidence" value="ECO:0007669"/>
    <property type="project" value="UniProtKB-UniRule"/>
</dbReference>
<dbReference type="CDD" id="cd00671">
    <property type="entry name" value="ArgRS_core"/>
    <property type="match status" value="1"/>
</dbReference>
<dbReference type="FunFam" id="1.10.730.10:FF:000008">
    <property type="entry name" value="Arginine--tRNA ligase"/>
    <property type="match status" value="1"/>
</dbReference>
<dbReference type="FunFam" id="3.40.50.620:FF:000062">
    <property type="entry name" value="Arginine--tRNA ligase"/>
    <property type="match status" value="1"/>
</dbReference>
<dbReference type="Gene3D" id="3.30.1360.70">
    <property type="entry name" value="Arginyl tRNA synthetase N-terminal domain"/>
    <property type="match status" value="1"/>
</dbReference>
<dbReference type="Gene3D" id="3.40.50.620">
    <property type="entry name" value="HUPs"/>
    <property type="match status" value="1"/>
</dbReference>
<dbReference type="Gene3D" id="1.10.730.10">
    <property type="entry name" value="Isoleucyl-tRNA Synthetase, Domain 1"/>
    <property type="match status" value="1"/>
</dbReference>
<dbReference type="HAMAP" id="MF_00123">
    <property type="entry name" value="Arg_tRNA_synth"/>
    <property type="match status" value="1"/>
</dbReference>
<dbReference type="InterPro" id="IPR001412">
    <property type="entry name" value="aa-tRNA-synth_I_CS"/>
</dbReference>
<dbReference type="InterPro" id="IPR001278">
    <property type="entry name" value="Arg-tRNA-ligase"/>
</dbReference>
<dbReference type="InterPro" id="IPR005148">
    <property type="entry name" value="Arg-tRNA-synth_N"/>
</dbReference>
<dbReference type="InterPro" id="IPR036695">
    <property type="entry name" value="Arg-tRNA-synth_N_sf"/>
</dbReference>
<dbReference type="InterPro" id="IPR035684">
    <property type="entry name" value="ArgRS_core"/>
</dbReference>
<dbReference type="InterPro" id="IPR008909">
    <property type="entry name" value="DALR_anticod-bd"/>
</dbReference>
<dbReference type="InterPro" id="IPR014729">
    <property type="entry name" value="Rossmann-like_a/b/a_fold"/>
</dbReference>
<dbReference type="InterPro" id="IPR009080">
    <property type="entry name" value="tRNAsynth_Ia_anticodon-bd"/>
</dbReference>
<dbReference type="NCBIfam" id="TIGR00456">
    <property type="entry name" value="argS"/>
    <property type="match status" value="1"/>
</dbReference>
<dbReference type="PANTHER" id="PTHR11956:SF5">
    <property type="entry name" value="ARGININE--TRNA LIGASE, CYTOPLASMIC"/>
    <property type="match status" value="1"/>
</dbReference>
<dbReference type="PANTHER" id="PTHR11956">
    <property type="entry name" value="ARGINYL-TRNA SYNTHETASE"/>
    <property type="match status" value="1"/>
</dbReference>
<dbReference type="Pfam" id="PF03485">
    <property type="entry name" value="Arg_tRNA_synt_N"/>
    <property type="match status" value="1"/>
</dbReference>
<dbReference type="Pfam" id="PF05746">
    <property type="entry name" value="DALR_1"/>
    <property type="match status" value="1"/>
</dbReference>
<dbReference type="Pfam" id="PF00750">
    <property type="entry name" value="tRNA-synt_1d"/>
    <property type="match status" value="1"/>
</dbReference>
<dbReference type="PRINTS" id="PR01038">
    <property type="entry name" value="TRNASYNTHARG"/>
</dbReference>
<dbReference type="SMART" id="SM01016">
    <property type="entry name" value="Arg_tRNA_synt_N"/>
    <property type="match status" value="1"/>
</dbReference>
<dbReference type="SMART" id="SM00836">
    <property type="entry name" value="DALR_1"/>
    <property type="match status" value="1"/>
</dbReference>
<dbReference type="SUPFAM" id="SSF47323">
    <property type="entry name" value="Anticodon-binding domain of a subclass of class I aminoacyl-tRNA synthetases"/>
    <property type="match status" value="1"/>
</dbReference>
<dbReference type="SUPFAM" id="SSF55190">
    <property type="entry name" value="Arginyl-tRNA synthetase (ArgRS), N-terminal 'additional' domain"/>
    <property type="match status" value="1"/>
</dbReference>
<dbReference type="SUPFAM" id="SSF52374">
    <property type="entry name" value="Nucleotidylyl transferase"/>
    <property type="match status" value="1"/>
</dbReference>
<dbReference type="PROSITE" id="PS00178">
    <property type="entry name" value="AA_TRNA_LIGASE_I"/>
    <property type="match status" value="1"/>
</dbReference>
<evidence type="ECO:0000255" key="1">
    <source>
        <dbReference type="HAMAP-Rule" id="MF_00123"/>
    </source>
</evidence>
<keyword id="KW-0030">Aminoacyl-tRNA synthetase</keyword>
<keyword id="KW-0067">ATP-binding</keyword>
<keyword id="KW-0963">Cytoplasm</keyword>
<keyword id="KW-0436">Ligase</keyword>
<keyword id="KW-0547">Nucleotide-binding</keyword>
<keyword id="KW-0648">Protein biosynthesis</keyword>
<feature type="chain" id="PRO_1000203091" description="Arginine--tRNA ligase">
    <location>
        <begin position="1"/>
        <end position="551"/>
    </location>
</feature>
<feature type="short sequence motif" description="'HIGH' region">
    <location>
        <begin position="124"/>
        <end position="134"/>
    </location>
</feature>
<comment type="catalytic activity">
    <reaction evidence="1">
        <text>tRNA(Arg) + L-arginine + ATP = L-arginyl-tRNA(Arg) + AMP + diphosphate</text>
        <dbReference type="Rhea" id="RHEA:20301"/>
        <dbReference type="Rhea" id="RHEA-COMP:9658"/>
        <dbReference type="Rhea" id="RHEA-COMP:9673"/>
        <dbReference type="ChEBI" id="CHEBI:30616"/>
        <dbReference type="ChEBI" id="CHEBI:32682"/>
        <dbReference type="ChEBI" id="CHEBI:33019"/>
        <dbReference type="ChEBI" id="CHEBI:78442"/>
        <dbReference type="ChEBI" id="CHEBI:78513"/>
        <dbReference type="ChEBI" id="CHEBI:456215"/>
        <dbReference type="EC" id="6.1.1.19"/>
    </reaction>
</comment>
<comment type="subunit">
    <text evidence="1">Monomer.</text>
</comment>
<comment type="subcellular location">
    <subcellularLocation>
        <location evidence="1">Cytoplasm</location>
    </subcellularLocation>
</comment>
<comment type="similarity">
    <text evidence="1">Belongs to the class-I aminoacyl-tRNA synthetase family.</text>
</comment>
<organism>
    <name type="scientific">Solidesulfovibrio magneticus (strain ATCC 700980 / DSM 13731 / RS-1)</name>
    <name type="common">Desulfovibrio magneticus</name>
    <dbReference type="NCBI Taxonomy" id="573370"/>
    <lineage>
        <taxon>Bacteria</taxon>
        <taxon>Pseudomonadati</taxon>
        <taxon>Thermodesulfobacteriota</taxon>
        <taxon>Desulfovibrionia</taxon>
        <taxon>Desulfovibrionales</taxon>
        <taxon>Desulfovibrionaceae</taxon>
        <taxon>Solidesulfovibrio</taxon>
    </lineage>
</organism>
<protein>
    <recommendedName>
        <fullName evidence="1">Arginine--tRNA ligase</fullName>
        <ecNumber evidence="1">6.1.1.19</ecNumber>
    </recommendedName>
    <alternativeName>
        <fullName evidence="1">Arginyl-tRNA synthetase</fullName>
        <shortName evidence="1">ArgRS</shortName>
    </alternativeName>
</protein>
<accession>C4XSX9</accession>
<sequence>MRATAILRDLLASALENQGIAWPVKTTIEPPRDKAHGDLATNVAMMASKAAKKPPRELAESLRQALAADPRLASVEVAGPGFLNVAFTPAFWQETVCDVAKAGDGYGLLDIGQGVKIQVEFVSANPTGPLHIGHGRGAAVGDSLARVLRAAGFTVETEYYINDAGRQMRILGMSILYRYKELIGEPVTEPEDYYRGEYVIPLAQDMIDAHGRKLLEMPEAEATDICRLHGEREILAGIKKDLEDFRVHHDVWFPESTLLAAGAVDAAFNELRDKKLAYDQDGAFWFASTAFGDDKDRVLVKSGGELTYFASDIAYHADKFRRGFDVVVDIWGADHHGYVPRMKACVSALGRDPEASLKVILVQLVNLLKGGEQIAMSTRAGKFETLADVVKEVGADSARFMFLSRKSDSHLDFDLDAVKEKSMDNPVYYVQYAHARVRSLFAKAQERGQAVAETSPELLALLTTDEDLELLKLLEQYPDTVAAAARTFSPHLVSFYLRDLAGRLHRYYTVNPVLTAGSDDLASARLRLLDAVAQTIKNGLDLLGVSAPDKM</sequence>
<reference key="1">
    <citation type="journal article" date="2009" name="Genome Res.">
        <title>Whole genome sequence of Desulfovibrio magneticus strain RS-1 revealed common gene clusters in magnetotactic bacteria.</title>
        <authorList>
            <person name="Nakazawa H."/>
            <person name="Arakaki A."/>
            <person name="Narita-Yamada S."/>
            <person name="Yashiro I."/>
            <person name="Jinno K."/>
            <person name="Aoki N."/>
            <person name="Tsuruyama A."/>
            <person name="Okamura Y."/>
            <person name="Tanikawa S."/>
            <person name="Fujita N."/>
            <person name="Takeyama H."/>
            <person name="Matsunaga T."/>
        </authorList>
    </citation>
    <scope>NUCLEOTIDE SEQUENCE [LARGE SCALE GENOMIC DNA]</scope>
    <source>
        <strain>ATCC 700980 / DSM 13731 / RS-1</strain>
    </source>
</reference>